<protein>
    <recommendedName>
        <fullName evidence="1">Small ribosomal subunit protein bS6</fullName>
    </recommendedName>
    <alternativeName>
        <fullName evidence="2">30S ribosomal protein S6</fullName>
    </alternativeName>
</protein>
<evidence type="ECO:0000255" key="1">
    <source>
        <dbReference type="HAMAP-Rule" id="MF_00360"/>
    </source>
</evidence>
<evidence type="ECO:0000305" key="2"/>
<comment type="function">
    <text evidence="1">Binds together with bS18 to 16S ribosomal RNA.</text>
</comment>
<comment type="similarity">
    <text evidence="1">Belongs to the bacterial ribosomal protein bS6 family.</text>
</comment>
<dbReference type="EMBL" id="CP001097">
    <property type="protein sequence ID" value="ACD89246.1"/>
    <property type="molecule type" value="Genomic_DNA"/>
</dbReference>
<dbReference type="RefSeq" id="WP_012465127.1">
    <property type="nucleotide sequence ID" value="NC_010803.1"/>
</dbReference>
<dbReference type="SMR" id="B3EEB2"/>
<dbReference type="STRING" id="290315.Clim_0147"/>
<dbReference type="KEGG" id="cli:Clim_0147"/>
<dbReference type="eggNOG" id="COG0360">
    <property type="taxonomic scope" value="Bacteria"/>
</dbReference>
<dbReference type="HOGENOM" id="CLU_113441_4_1_10"/>
<dbReference type="OrthoDB" id="9812702at2"/>
<dbReference type="Proteomes" id="UP000008841">
    <property type="component" value="Chromosome"/>
</dbReference>
<dbReference type="GO" id="GO:0005737">
    <property type="term" value="C:cytoplasm"/>
    <property type="evidence" value="ECO:0007669"/>
    <property type="project" value="UniProtKB-ARBA"/>
</dbReference>
<dbReference type="GO" id="GO:1990904">
    <property type="term" value="C:ribonucleoprotein complex"/>
    <property type="evidence" value="ECO:0007669"/>
    <property type="project" value="UniProtKB-KW"/>
</dbReference>
<dbReference type="GO" id="GO:0005840">
    <property type="term" value="C:ribosome"/>
    <property type="evidence" value="ECO:0007669"/>
    <property type="project" value="UniProtKB-KW"/>
</dbReference>
<dbReference type="GO" id="GO:0070181">
    <property type="term" value="F:small ribosomal subunit rRNA binding"/>
    <property type="evidence" value="ECO:0007669"/>
    <property type="project" value="TreeGrafter"/>
</dbReference>
<dbReference type="GO" id="GO:0003735">
    <property type="term" value="F:structural constituent of ribosome"/>
    <property type="evidence" value="ECO:0007669"/>
    <property type="project" value="InterPro"/>
</dbReference>
<dbReference type="GO" id="GO:0006412">
    <property type="term" value="P:translation"/>
    <property type="evidence" value="ECO:0007669"/>
    <property type="project" value="UniProtKB-UniRule"/>
</dbReference>
<dbReference type="CDD" id="cd00473">
    <property type="entry name" value="bS6"/>
    <property type="match status" value="1"/>
</dbReference>
<dbReference type="Gene3D" id="3.30.70.60">
    <property type="match status" value="1"/>
</dbReference>
<dbReference type="HAMAP" id="MF_00360">
    <property type="entry name" value="Ribosomal_bS6"/>
    <property type="match status" value="1"/>
</dbReference>
<dbReference type="InterPro" id="IPR000529">
    <property type="entry name" value="Ribosomal_bS6"/>
</dbReference>
<dbReference type="InterPro" id="IPR035980">
    <property type="entry name" value="Ribosomal_bS6_sf"/>
</dbReference>
<dbReference type="InterPro" id="IPR020814">
    <property type="entry name" value="Ribosomal_S6_plastid/chlpt"/>
</dbReference>
<dbReference type="InterPro" id="IPR014717">
    <property type="entry name" value="Transl_elong_EF1B/ribsomal_bS6"/>
</dbReference>
<dbReference type="NCBIfam" id="TIGR00166">
    <property type="entry name" value="S6"/>
    <property type="match status" value="1"/>
</dbReference>
<dbReference type="PANTHER" id="PTHR21011">
    <property type="entry name" value="MITOCHONDRIAL 28S RIBOSOMAL PROTEIN S6"/>
    <property type="match status" value="1"/>
</dbReference>
<dbReference type="PANTHER" id="PTHR21011:SF1">
    <property type="entry name" value="SMALL RIBOSOMAL SUBUNIT PROTEIN BS6M"/>
    <property type="match status" value="1"/>
</dbReference>
<dbReference type="Pfam" id="PF01250">
    <property type="entry name" value="Ribosomal_S6"/>
    <property type="match status" value="1"/>
</dbReference>
<dbReference type="SUPFAM" id="SSF54995">
    <property type="entry name" value="Ribosomal protein S6"/>
    <property type="match status" value="1"/>
</dbReference>
<name>RS6_CHLL2</name>
<feature type="chain" id="PRO_1000120723" description="Small ribosomal subunit protein bS6">
    <location>
        <begin position="1"/>
        <end position="133"/>
    </location>
</feature>
<sequence>MEKTKLYECTVIIDGGLQDEAIAAAMEMVQKVITEKGGSISSVLEVGRRKTAYPINKKTIGYYAHIEFTAAAPVIGAIEKVLRYEEDLLRYLIIHLTSALLEMRKRVEKYSVVIGSPEDTAAAESDDSGKDAK</sequence>
<keyword id="KW-0687">Ribonucleoprotein</keyword>
<keyword id="KW-0689">Ribosomal protein</keyword>
<keyword id="KW-0694">RNA-binding</keyword>
<keyword id="KW-0699">rRNA-binding</keyword>
<gene>
    <name evidence="1" type="primary">rpsF</name>
    <name type="ordered locus">Clim_0147</name>
</gene>
<organism>
    <name type="scientific">Chlorobium limicola (strain DSM 245 / NBRC 103803 / 6330)</name>
    <dbReference type="NCBI Taxonomy" id="290315"/>
    <lineage>
        <taxon>Bacteria</taxon>
        <taxon>Pseudomonadati</taxon>
        <taxon>Chlorobiota</taxon>
        <taxon>Chlorobiia</taxon>
        <taxon>Chlorobiales</taxon>
        <taxon>Chlorobiaceae</taxon>
        <taxon>Chlorobium/Pelodictyon group</taxon>
        <taxon>Chlorobium</taxon>
    </lineage>
</organism>
<proteinExistence type="inferred from homology"/>
<reference key="1">
    <citation type="submission" date="2008-05" db="EMBL/GenBank/DDBJ databases">
        <title>Complete sequence of Chlorobium limicola DSM 245.</title>
        <authorList>
            <consortium name="US DOE Joint Genome Institute"/>
            <person name="Lucas S."/>
            <person name="Copeland A."/>
            <person name="Lapidus A."/>
            <person name="Glavina del Rio T."/>
            <person name="Dalin E."/>
            <person name="Tice H."/>
            <person name="Bruce D."/>
            <person name="Goodwin L."/>
            <person name="Pitluck S."/>
            <person name="Schmutz J."/>
            <person name="Larimer F."/>
            <person name="Land M."/>
            <person name="Hauser L."/>
            <person name="Kyrpides N."/>
            <person name="Ovchinnikova G."/>
            <person name="Zhao F."/>
            <person name="Li T."/>
            <person name="Liu Z."/>
            <person name="Overmann J."/>
            <person name="Bryant D.A."/>
            <person name="Richardson P."/>
        </authorList>
    </citation>
    <scope>NUCLEOTIDE SEQUENCE [LARGE SCALE GENOMIC DNA]</scope>
    <source>
        <strain>DSM 245 / NBRC 103803 / 6330</strain>
    </source>
</reference>
<accession>B3EEB2</accession>